<keyword id="KW-0687">Ribonucleoprotein</keyword>
<keyword id="KW-0689">Ribosomal protein</keyword>
<sequence>MAVKIRLRRMGAHKAPFYRVVVADSRSPRDGRFIEEIGYYNPIAKPEAEVKIDAEKAAKWLGNGAQPTDIVKKLFNQAGIK</sequence>
<reference key="1">
    <citation type="journal article" date="2006" name="Genome Res.">
        <title>Skewed genomic variability in strains of the toxigenic bacterial pathogen, Clostridium perfringens.</title>
        <authorList>
            <person name="Myers G.S.A."/>
            <person name="Rasko D.A."/>
            <person name="Cheung J.K."/>
            <person name="Ravel J."/>
            <person name="Seshadri R."/>
            <person name="DeBoy R.T."/>
            <person name="Ren Q."/>
            <person name="Varga J."/>
            <person name="Awad M.M."/>
            <person name="Brinkac L.M."/>
            <person name="Daugherty S.C."/>
            <person name="Haft D.H."/>
            <person name="Dodson R.J."/>
            <person name="Madupu R."/>
            <person name="Nelson W.C."/>
            <person name="Rosovitz M.J."/>
            <person name="Sullivan S.A."/>
            <person name="Khouri H."/>
            <person name="Dimitrov G.I."/>
            <person name="Watkins K.L."/>
            <person name="Mulligan S."/>
            <person name="Benton J."/>
            <person name="Radune D."/>
            <person name="Fisher D.J."/>
            <person name="Atkins H.S."/>
            <person name="Hiscox T."/>
            <person name="Jost B.H."/>
            <person name="Billington S.J."/>
            <person name="Songer J.G."/>
            <person name="McClane B.A."/>
            <person name="Titball R.W."/>
            <person name="Rood J.I."/>
            <person name="Melville S.B."/>
            <person name="Paulsen I.T."/>
        </authorList>
    </citation>
    <scope>NUCLEOTIDE SEQUENCE [LARGE SCALE GENOMIC DNA]</scope>
    <source>
        <strain>ATCC 13124 / DSM 756 / JCM 1290 / NCIMB 6125 / NCTC 8237 / S 107 / Type A</strain>
    </source>
</reference>
<feature type="chain" id="PRO_1000049245" description="Small ribosomal subunit protein bS16">
    <location>
        <begin position="1"/>
        <end position="81"/>
    </location>
</feature>
<gene>
    <name evidence="1" type="primary">rpsP</name>
    <name type="ordered locus">CPF_1966</name>
</gene>
<evidence type="ECO:0000255" key="1">
    <source>
        <dbReference type="HAMAP-Rule" id="MF_00385"/>
    </source>
</evidence>
<evidence type="ECO:0000305" key="2"/>
<name>RS16_CLOP1</name>
<dbReference type="EMBL" id="CP000246">
    <property type="protein sequence ID" value="ABG82970.1"/>
    <property type="molecule type" value="Genomic_DNA"/>
</dbReference>
<dbReference type="RefSeq" id="WP_003458442.1">
    <property type="nucleotide sequence ID" value="NC_008261.1"/>
</dbReference>
<dbReference type="SMR" id="Q0TPP1"/>
<dbReference type="STRING" id="195103.CPF_1966"/>
<dbReference type="PaxDb" id="195103-CPF_1966"/>
<dbReference type="GeneID" id="93001750"/>
<dbReference type="KEGG" id="cpf:CPF_1966"/>
<dbReference type="eggNOG" id="COG0228">
    <property type="taxonomic scope" value="Bacteria"/>
</dbReference>
<dbReference type="HOGENOM" id="CLU_100590_5_0_9"/>
<dbReference type="Proteomes" id="UP000001823">
    <property type="component" value="Chromosome"/>
</dbReference>
<dbReference type="GO" id="GO:0005737">
    <property type="term" value="C:cytoplasm"/>
    <property type="evidence" value="ECO:0007669"/>
    <property type="project" value="UniProtKB-ARBA"/>
</dbReference>
<dbReference type="GO" id="GO:0015935">
    <property type="term" value="C:small ribosomal subunit"/>
    <property type="evidence" value="ECO:0007669"/>
    <property type="project" value="TreeGrafter"/>
</dbReference>
<dbReference type="GO" id="GO:0003735">
    <property type="term" value="F:structural constituent of ribosome"/>
    <property type="evidence" value="ECO:0007669"/>
    <property type="project" value="InterPro"/>
</dbReference>
<dbReference type="GO" id="GO:0006412">
    <property type="term" value="P:translation"/>
    <property type="evidence" value="ECO:0007669"/>
    <property type="project" value="UniProtKB-UniRule"/>
</dbReference>
<dbReference type="Gene3D" id="3.30.1320.10">
    <property type="match status" value="1"/>
</dbReference>
<dbReference type="HAMAP" id="MF_00385">
    <property type="entry name" value="Ribosomal_bS16"/>
    <property type="match status" value="1"/>
</dbReference>
<dbReference type="InterPro" id="IPR000307">
    <property type="entry name" value="Ribosomal_bS16"/>
</dbReference>
<dbReference type="InterPro" id="IPR023803">
    <property type="entry name" value="Ribosomal_bS16_dom_sf"/>
</dbReference>
<dbReference type="NCBIfam" id="TIGR00002">
    <property type="entry name" value="S16"/>
    <property type="match status" value="1"/>
</dbReference>
<dbReference type="PANTHER" id="PTHR12919">
    <property type="entry name" value="30S RIBOSOMAL PROTEIN S16"/>
    <property type="match status" value="1"/>
</dbReference>
<dbReference type="PANTHER" id="PTHR12919:SF20">
    <property type="entry name" value="SMALL RIBOSOMAL SUBUNIT PROTEIN BS16M"/>
    <property type="match status" value="1"/>
</dbReference>
<dbReference type="Pfam" id="PF00886">
    <property type="entry name" value="Ribosomal_S16"/>
    <property type="match status" value="1"/>
</dbReference>
<dbReference type="SUPFAM" id="SSF54565">
    <property type="entry name" value="Ribosomal protein S16"/>
    <property type="match status" value="1"/>
</dbReference>
<organism>
    <name type="scientific">Clostridium perfringens (strain ATCC 13124 / DSM 756 / JCM 1290 / NCIMB 6125 / NCTC 8237 / Type A)</name>
    <dbReference type="NCBI Taxonomy" id="195103"/>
    <lineage>
        <taxon>Bacteria</taxon>
        <taxon>Bacillati</taxon>
        <taxon>Bacillota</taxon>
        <taxon>Clostridia</taxon>
        <taxon>Eubacteriales</taxon>
        <taxon>Clostridiaceae</taxon>
        <taxon>Clostridium</taxon>
    </lineage>
</organism>
<comment type="similarity">
    <text evidence="1">Belongs to the bacterial ribosomal protein bS16 family.</text>
</comment>
<proteinExistence type="inferred from homology"/>
<protein>
    <recommendedName>
        <fullName evidence="1">Small ribosomal subunit protein bS16</fullName>
    </recommendedName>
    <alternativeName>
        <fullName evidence="2">30S ribosomal protein S16</fullName>
    </alternativeName>
</protein>
<accession>Q0TPP1</accession>